<name>CYF_PROM1</name>
<accession>A2C0R8</accession>
<gene>
    <name evidence="1" type="primary">petA</name>
    <name type="ordered locus">NATL1_05161</name>
</gene>
<comment type="function">
    <text evidence="1">Component of the cytochrome b6-f complex, which mediates electron transfer between photosystem II (PSII) and photosystem I (PSI), cyclic electron flow around PSI, and state transitions.</text>
</comment>
<comment type="cofactor">
    <cofactor evidence="1">
        <name>heme</name>
        <dbReference type="ChEBI" id="CHEBI:30413"/>
    </cofactor>
    <text evidence="1">Binds 1 heme group covalently.</text>
</comment>
<comment type="subunit">
    <text evidence="1">The 4 large subunits of the cytochrome b6-f complex are cytochrome b6, subunit IV (17 kDa polypeptide, PetD), cytochrome f and the Rieske protein, while the 4 small subunits are PetG, PetL, PetM and PetN. The complex functions as a dimer.</text>
</comment>
<comment type="subcellular location">
    <subcellularLocation>
        <location evidence="1">Cellular thylakoid membrane</location>
        <topology evidence="1">Single-pass membrane protein</topology>
    </subcellularLocation>
</comment>
<comment type="similarity">
    <text evidence="1">Belongs to the cytochrome f family.</text>
</comment>
<feature type="signal peptide" evidence="1">
    <location>
        <begin position="1"/>
        <end position="38"/>
    </location>
</feature>
<feature type="chain" id="PRO_0000342035" description="Cytochrome f">
    <location>
        <begin position="39"/>
        <end position="321"/>
    </location>
</feature>
<feature type="transmembrane region" description="Helical" evidence="1">
    <location>
        <begin position="288"/>
        <end position="308"/>
    </location>
</feature>
<feature type="binding site" description="axial binding residue" evidence="1">
    <location>
        <position position="39"/>
    </location>
    <ligand>
        <name>heme</name>
        <dbReference type="ChEBI" id="CHEBI:30413"/>
    </ligand>
    <ligandPart>
        <name>Fe</name>
        <dbReference type="ChEBI" id="CHEBI:18248"/>
    </ligandPart>
</feature>
<feature type="binding site" description="covalent" evidence="1">
    <location>
        <position position="59"/>
    </location>
    <ligand>
        <name>heme</name>
        <dbReference type="ChEBI" id="CHEBI:30413"/>
    </ligand>
</feature>
<feature type="binding site" description="covalent" evidence="1">
    <location>
        <position position="62"/>
    </location>
    <ligand>
        <name>heme</name>
        <dbReference type="ChEBI" id="CHEBI:30413"/>
    </ligand>
</feature>
<feature type="binding site" description="axial binding residue" evidence="1">
    <location>
        <position position="63"/>
    </location>
    <ligand>
        <name>heme</name>
        <dbReference type="ChEBI" id="CHEBI:30413"/>
    </ligand>
    <ligandPart>
        <name>Fe</name>
        <dbReference type="ChEBI" id="CHEBI:18248"/>
    </ligandPart>
</feature>
<organism>
    <name type="scientific">Prochlorococcus marinus (strain NATL1A)</name>
    <dbReference type="NCBI Taxonomy" id="167555"/>
    <lineage>
        <taxon>Bacteria</taxon>
        <taxon>Bacillati</taxon>
        <taxon>Cyanobacteriota</taxon>
        <taxon>Cyanophyceae</taxon>
        <taxon>Synechococcales</taxon>
        <taxon>Prochlorococcaceae</taxon>
        <taxon>Prochlorococcus</taxon>
    </lineage>
</organism>
<reference key="1">
    <citation type="journal article" date="2007" name="PLoS Genet.">
        <title>Patterns and implications of gene gain and loss in the evolution of Prochlorococcus.</title>
        <authorList>
            <person name="Kettler G.C."/>
            <person name="Martiny A.C."/>
            <person name="Huang K."/>
            <person name="Zucker J."/>
            <person name="Coleman M.L."/>
            <person name="Rodrigue S."/>
            <person name="Chen F."/>
            <person name="Lapidus A."/>
            <person name="Ferriera S."/>
            <person name="Johnson J."/>
            <person name="Steglich C."/>
            <person name="Church G.M."/>
            <person name="Richardson P."/>
            <person name="Chisholm S.W."/>
        </authorList>
    </citation>
    <scope>NUCLEOTIDE SEQUENCE [LARGE SCALE GENOMIC DNA]</scope>
    <source>
        <strain>NATL1A</strain>
    </source>
</reference>
<protein>
    <recommendedName>
        <fullName evidence="1">Cytochrome f</fullName>
    </recommendedName>
</protein>
<evidence type="ECO:0000255" key="1">
    <source>
        <dbReference type="HAMAP-Rule" id="MF_00610"/>
    </source>
</evidence>
<proteinExistence type="inferred from homology"/>
<dbReference type="EMBL" id="CP000553">
    <property type="protein sequence ID" value="ABM75078.1"/>
    <property type="molecule type" value="Genomic_DNA"/>
</dbReference>
<dbReference type="SMR" id="A2C0R8"/>
<dbReference type="KEGG" id="pme:NATL1_05161"/>
<dbReference type="eggNOG" id="COG3258">
    <property type="taxonomic scope" value="Bacteria"/>
</dbReference>
<dbReference type="HOGENOM" id="CLU_033498_0_0_3"/>
<dbReference type="Proteomes" id="UP000002592">
    <property type="component" value="Chromosome"/>
</dbReference>
<dbReference type="GO" id="GO:0031676">
    <property type="term" value="C:plasma membrane-derived thylakoid membrane"/>
    <property type="evidence" value="ECO:0007669"/>
    <property type="project" value="UniProtKB-SubCell"/>
</dbReference>
<dbReference type="GO" id="GO:0009055">
    <property type="term" value="F:electron transfer activity"/>
    <property type="evidence" value="ECO:0007669"/>
    <property type="project" value="UniProtKB-UniRule"/>
</dbReference>
<dbReference type="GO" id="GO:0020037">
    <property type="term" value="F:heme binding"/>
    <property type="evidence" value="ECO:0007669"/>
    <property type="project" value="InterPro"/>
</dbReference>
<dbReference type="GO" id="GO:0005506">
    <property type="term" value="F:iron ion binding"/>
    <property type="evidence" value="ECO:0007669"/>
    <property type="project" value="InterPro"/>
</dbReference>
<dbReference type="GO" id="GO:0015979">
    <property type="term" value="P:photosynthesis"/>
    <property type="evidence" value="ECO:0007669"/>
    <property type="project" value="UniProtKB-UniRule"/>
</dbReference>
<dbReference type="Gene3D" id="2.40.50.100">
    <property type="match status" value="1"/>
</dbReference>
<dbReference type="Gene3D" id="2.60.40.830">
    <property type="entry name" value="Cytochrome f large domain"/>
    <property type="match status" value="1"/>
</dbReference>
<dbReference type="Gene3D" id="1.20.5.700">
    <property type="entry name" value="Single helix bin"/>
    <property type="match status" value="1"/>
</dbReference>
<dbReference type="HAMAP" id="MF_00610">
    <property type="entry name" value="Cytb6_f_cytF"/>
    <property type="match status" value="1"/>
</dbReference>
<dbReference type="InterPro" id="IPR024058">
    <property type="entry name" value="Cyt-f_TM"/>
</dbReference>
<dbReference type="InterPro" id="IPR002325">
    <property type="entry name" value="Cyt_f"/>
</dbReference>
<dbReference type="InterPro" id="IPR024094">
    <property type="entry name" value="Cyt_f_lg_dom"/>
</dbReference>
<dbReference type="InterPro" id="IPR036826">
    <property type="entry name" value="Cyt_f_lg_dom_sf"/>
</dbReference>
<dbReference type="InterPro" id="IPR011054">
    <property type="entry name" value="Rudment_hybrid_motif"/>
</dbReference>
<dbReference type="NCBIfam" id="NF002736">
    <property type="entry name" value="PRK02693.1"/>
    <property type="match status" value="1"/>
</dbReference>
<dbReference type="PANTHER" id="PTHR33288">
    <property type="match status" value="1"/>
</dbReference>
<dbReference type="PANTHER" id="PTHR33288:SF10">
    <property type="entry name" value="CYTOCHROME F"/>
    <property type="match status" value="1"/>
</dbReference>
<dbReference type="Pfam" id="PF01333">
    <property type="entry name" value="Apocytochr_F_C"/>
    <property type="match status" value="1"/>
</dbReference>
<dbReference type="Pfam" id="PF16639">
    <property type="entry name" value="Apocytochr_F_N"/>
    <property type="match status" value="1"/>
</dbReference>
<dbReference type="PRINTS" id="PR00610">
    <property type="entry name" value="CYTOCHROMEF"/>
</dbReference>
<dbReference type="SUPFAM" id="SSF103431">
    <property type="entry name" value="Cytochrome f subunit of the cytochrome b6f complex, transmembrane anchor"/>
    <property type="match status" value="1"/>
</dbReference>
<dbReference type="SUPFAM" id="SSF49441">
    <property type="entry name" value="Cytochrome f, large domain"/>
    <property type="match status" value="1"/>
</dbReference>
<dbReference type="SUPFAM" id="SSF51246">
    <property type="entry name" value="Rudiment single hybrid motif"/>
    <property type="match status" value="1"/>
</dbReference>
<dbReference type="PROSITE" id="PS51010">
    <property type="entry name" value="CYTF"/>
    <property type="match status" value="1"/>
</dbReference>
<sequence>MKKNFYTISKTMSRSLKLILFSVFIGFSIFLIPQPTWAYPFWAQQKFENPREATGKIVCANCHVASMPTRAEVPQAVAADSVFKTVVEIPYKKDLQEIGADGSKVPLQVGAVVMLPDGFKLAPQERWTDEIKEETQGVYFTQYSEEQENIILVGPLPGDQNREIVFPVLSPDPRKDSNYNFGKYSIHVGGNRGRGQVYPTGEKSNNNLFTATNSGTITSIETNEDGTQIINLNNEEGESFTENLPAGTSLLIKEGDTIEKGAKLTEDPNVGGFGQLDKEIVLQSKARVIGMIIFFIGVGLSQIMLVLKKKQVEKVQAAEGI</sequence>
<keyword id="KW-0249">Electron transport</keyword>
<keyword id="KW-0349">Heme</keyword>
<keyword id="KW-0408">Iron</keyword>
<keyword id="KW-0472">Membrane</keyword>
<keyword id="KW-0479">Metal-binding</keyword>
<keyword id="KW-0602">Photosynthesis</keyword>
<keyword id="KW-0732">Signal</keyword>
<keyword id="KW-0793">Thylakoid</keyword>
<keyword id="KW-0812">Transmembrane</keyword>
<keyword id="KW-1133">Transmembrane helix</keyword>
<keyword id="KW-0813">Transport</keyword>